<name>ISPE_STAA9</name>
<organism>
    <name type="scientific">Staphylococcus aureus (strain JH9)</name>
    <dbReference type="NCBI Taxonomy" id="359786"/>
    <lineage>
        <taxon>Bacteria</taxon>
        <taxon>Bacillati</taxon>
        <taxon>Bacillota</taxon>
        <taxon>Bacilli</taxon>
        <taxon>Bacillales</taxon>
        <taxon>Staphylococcaceae</taxon>
        <taxon>Staphylococcus</taxon>
    </lineage>
</organism>
<evidence type="ECO:0000255" key="1">
    <source>
        <dbReference type="HAMAP-Rule" id="MF_00061"/>
    </source>
</evidence>
<dbReference type="EC" id="2.7.1.148" evidence="1"/>
<dbReference type="EMBL" id="CP000703">
    <property type="protein sequence ID" value="ABQ48320.1"/>
    <property type="molecule type" value="Genomic_DNA"/>
</dbReference>
<dbReference type="SMR" id="A5IQ47"/>
<dbReference type="KEGG" id="saj:SaurJH9_0516"/>
<dbReference type="HOGENOM" id="CLU_053057_1_1_9"/>
<dbReference type="GO" id="GO:0050515">
    <property type="term" value="F:4-(cytidine 5'-diphospho)-2-C-methyl-D-erythritol kinase activity"/>
    <property type="evidence" value="ECO:0007669"/>
    <property type="project" value="UniProtKB-UniRule"/>
</dbReference>
<dbReference type="GO" id="GO:0005524">
    <property type="term" value="F:ATP binding"/>
    <property type="evidence" value="ECO:0007669"/>
    <property type="project" value="UniProtKB-UniRule"/>
</dbReference>
<dbReference type="GO" id="GO:0016114">
    <property type="term" value="P:terpenoid biosynthetic process"/>
    <property type="evidence" value="ECO:0007669"/>
    <property type="project" value="InterPro"/>
</dbReference>
<dbReference type="FunFam" id="3.30.230.10:FF:000029">
    <property type="entry name" value="4-diphosphocytidyl-2-C-methyl-D-erythritol kinase"/>
    <property type="match status" value="1"/>
</dbReference>
<dbReference type="FunFam" id="3.30.70.890:FF:000006">
    <property type="entry name" value="4-diphosphocytidyl-2-C-methyl-D-erythritol kinase"/>
    <property type="match status" value="1"/>
</dbReference>
<dbReference type="Gene3D" id="3.30.230.10">
    <property type="match status" value="1"/>
</dbReference>
<dbReference type="Gene3D" id="3.30.70.890">
    <property type="entry name" value="GHMP kinase, C-terminal domain"/>
    <property type="match status" value="1"/>
</dbReference>
<dbReference type="HAMAP" id="MF_00061">
    <property type="entry name" value="IspE"/>
    <property type="match status" value="1"/>
</dbReference>
<dbReference type="InterPro" id="IPR013750">
    <property type="entry name" value="GHMP_kinase_C_dom"/>
</dbReference>
<dbReference type="InterPro" id="IPR036554">
    <property type="entry name" value="GHMP_kinase_C_sf"/>
</dbReference>
<dbReference type="InterPro" id="IPR006204">
    <property type="entry name" value="GHMP_kinase_N_dom"/>
</dbReference>
<dbReference type="InterPro" id="IPR004424">
    <property type="entry name" value="IspE"/>
</dbReference>
<dbReference type="InterPro" id="IPR020568">
    <property type="entry name" value="Ribosomal_Su5_D2-typ_SF"/>
</dbReference>
<dbReference type="InterPro" id="IPR014721">
    <property type="entry name" value="Ribsml_uS5_D2-typ_fold_subgr"/>
</dbReference>
<dbReference type="NCBIfam" id="TIGR00154">
    <property type="entry name" value="ispE"/>
    <property type="match status" value="1"/>
</dbReference>
<dbReference type="PANTHER" id="PTHR43527">
    <property type="entry name" value="4-DIPHOSPHOCYTIDYL-2-C-METHYL-D-ERYTHRITOL KINASE, CHLOROPLASTIC"/>
    <property type="match status" value="1"/>
</dbReference>
<dbReference type="PANTHER" id="PTHR43527:SF2">
    <property type="entry name" value="4-DIPHOSPHOCYTIDYL-2-C-METHYL-D-ERYTHRITOL KINASE, CHLOROPLASTIC"/>
    <property type="match status" value="1"/>
</dbReference>
<dbReference type="Pfam" id="PF08544">
    <property type="entry name" value="GHMP_kinases_C"/>
    <property type="match status" value="1"/>
</dbReference>
<dbReference type="Pfam" id="PF00288">
    <property type="entry name" value="GHMP_kinases_N"/>
    <property type="match status" value="1"/>
</dbReference>
<dbReference type="PIRSF" id="PIRSF010376">
    <property type="entry name" value="IspE"/>
    <property type="match status" value="1"/>
</dbReference>
<dbReference type="SUPFAM" id="SSF55060">
    <property type="entry name" value="GHMP Kinase, C-terminal domain"/>
    <property type="match status" value="1"/>
</dbReference>
<dbReference type="SUPFAM" id="SSF54211">
    <property type="entry name" value="Ribosomal protein S5 domain 2-like"/>
    <property type="match status" value="1"/>
</dbReference>
<gene>
    <name type="ordered locus">SaurJH9_0516</name>
</gene>
<comment type="function">
    <text evidence="1">Catalyzes the phosphorylation of the position 2 hydroxy group of 4-diphosphocytidyl-2C-methyl-D-erythritol.</text>
</comment>
<comment type="catalytic activity">
    <reaction evidence="1">
        <text>4-CDP-2-C-methyl-D-erythritol + ATP = 4-CDP-2-C-methyl-D-erythritol 2-phosphate + ADP + H(+)</text>
        <dbReference type="Rhea" id="RHEA:18437"/>
        <dbReference type="ChEBI" id="CHEBI:15378"/>
        <dbReference type="ChEBI" id="CHEBI:30616"/>
        <dbReference type="ChEBI" id="CHEBI:57823"/>
        <dbReference type="ChEBI" id="CHEBI:57919"/>
        <dbReference type="ChEBI" id="CHEBI:456216"/>
        <dbReference type="EC" id="2.7.1.148"/>
    </reaction>
</comment>
<comment type="similarity">
    <text evidence="1">Belongs to the GHMP kinase family. IspE subfamily.</text>
</comment>
<proteinExistence type="inferred from homology"/>
<reference key="1">
    <citation type="submission" date="2007-05" db="EMBL/GenBank/DDBJ databases">
        <title>Complete sequence of chromosome of Staphylococcus aureus subsp. aureus JH9.</title>
        <authorList>
            <consortium name="US DOE Joint Genome Institute"/>
            <person name="Copeland A."/>
            <person name="Lucas S."/>
            <person name="Lapidus A."/>
            <person name="Barry K."/>
            <person name="Detter J.C."/>
            <person name="Glavina del Rio T."/>
            <person name="Hammon N."/>
            <person name="Israni S."/>
            <person name="Pitluck S."/>
            <person name="Chain P."/>
            <person name="Malfatti S."/>
            <person name="Shin M."/>
            <person name="Vergez L."/>
            <person name="Schmutz J."/>
            <person name="Larimer F."/>
            <person name="Land M."/>
            <person name="Hauser L."/>
            <person name="Kyrpides N."/>
            <person name="Kim E."/>
            <person name="Tomasz A."/>
            <person name="Richardson P."/>
        </authorList>
    </citation>
    <scope>NUCLEOTIDE SEQUENCE [LARGE SCALE GENOMIC DNA]</scope>
    <source>
        <strain>JH9</strain>
    </source>
</reference>
<protein>
    <recommendedName>
        <fullName evidence="1">Putative 4-diphosphocytidyl-2-C-methyl-D-erythritol kinase</fullName>
        <shortName evidence="1">CMK</shortName>
        <ecNumber evidence="1">2.7.1.148</ecNumber>
    </recommendedName>
    <alternativeName>
        <fullName evidence="1">4-(cytidine-5'-diphospho)-2-C-methyl-D-erythritol kinase</fullName>
    </alternativeName>
</protein>
<accession>A5IQ47</accession>
<feature type="chain" id="PRO_1000075063" description="Putative 4-diphosphocytidyl-2-C-methyl-D-erythritol kinase">
    <location>
        <begin position="1"/>
        <end position="282"/>
    </location>
</feature>
<feature type="active site" evidence="1">
    <location>
        <position position="9"/>
    </location>
</feature>
<feature type="active site" evidence="1">
    <location>
        <position position="135"/>
    </location>
</feature>
<feature type="binding site" evidence="1">
    <location>
        <begin position="93"/>
        <end position="103"/>
    </location>
    <ligand>
        <name>ATP</name>
        <dbReference type="ChEBI" id="CHEBI:30616"/>
    </ligand>
</feature>
<sequence length="282" mass="31442">MIYETAPAKINFTLDTLFKRNDGYHEIEMIMTTVDLNDRLTFHKRKDRKIVVEIEHNYVPSNHKNLAYRAAQLFIEQYQLKQGVTISIDKEIPVSAGLAGGSADAAATLRGLNRLFDIGASLEELALLGSKIGTDIPFCIYNKTALCTGRGEKIEFLNKPPSAWVILAKPNLGISSPDIFKLINLDKRYDVHTKMCYEALENRDYQQLCQSLSNRLEPISVSKHPQIDKLKNNMLKSGADGALMSGSGPTVYGLARKESQAKNIYNAVNGCCNEVYLVRLLG</sequence>
<keyword id="KW-0067">ATP-binding</keyword>
<keyword id="KW-0418">Kinase</keyword>
<keyword id="KW-0547">Nucleotide-binding</keyword>
<keyword id="KW-0808">Transferase</keyword>